<protein>
    <recommendedName>
        <fullName evidence="1">Pyridoxine 5'-phosphate synthase</fullName>
        <shortName evidence="1">PNP synthase</shortName>
        <ecNumber evidence="1">2.6.99.2</ecNumber>
    </recommendedName>
</protein>
<organism>
    <name type="scientific">Blochmanniella pennsylvanica (strain BPEN)</name>
    <dbReference type="NCBI Taxonomy" id="291272"/>
    <lineage>
        <taxon>Bacteria</taxon>
        <taxon>Pseudomonadati</taxon>
        <taxon>Pseudomonadota</taxon>
        <taxon>Gammaproteobacteria</taxon>
        <taxon>Enterobacterales</taxon>
        <taxon>Enterobacteriaceae</taxon>
        <taxon>ant endosymbionts</taxon>
        <taxon>Candidatus Blochmanniella</taxon>
    </lineage>
</organism>
<name>PDXJ_BLOPB</name>
<reference key="1">
    <citation type="journal article" date="2005" name="Genome Res.">
        <title>Genome sequence of Blochmannia pennsylvanicus indicates parallel evolutionary trends among bacterial mutualists of insects.</title>
        <authorList>
            <person name="Degnan P.H."/>
            <person name="Lazarus A.B."/>
            <person name="Wernegreen J.J."/>
        </authorList>
    </citation>
    <scope>NUCLEOTIDE SEQUENCE [LARGE SCALE GENOMIC DNA]</scope>
    <source>
        <strain>BPEN</strain>
    </source>
</reference>
<proteinExistence type="inferred from homology"/>
<comment type="function">
    <text evidence="1">Catalyzes the complicated ring closure reaction between the two acyclic compounds 1-deoxy-D-xylulose-5-phosphate (DXP) and 3-amino-2-oxopropyl phosphate (1-amino-acetone-3-phosphate or AAP) to form pyridoxine 5'-phosphate (PNP) and inorganic phosphate.</text>
</comment>
<comment type="catalytic activity">
    <reaction evidence="1">
        <text>3-amino-2-oxopropyl phosphate + 1-deoxy-D-xylulose 5-phosphate = pyridoxine 5'-phosphate + phosphate + 2 H2O + H(+)</text>
        <dbReference type="Rhea" id="RHEA:15265"/>
        <dbReference type="ChEBI" id="CHEBI:15377"/>
        <dbReference type="ChEBI" id="CHEBI:15378"/>
        <dbReference type="ChEBI" id="CHEBI:43474"/>
        <dbReference type="ChEBI" id="CHEBI:57279"/>
        <dbReference type="ChEBI" id="CHEBI:57792"/>
        <dbReference type="ChEBI" id="CHEBI:58589"/>
        <dbReference type="EC" id="2.6.99.2"/>
    </reaction>
</comment>
<comment type="pathway">
    <text evidence="1">Cofactor biosynthesis; pyridoxine 5'-phosphate biosynthesis; pyridoxine 5'-phosphate from D-erythrose 4-phosphate: step 5/5.</text>
</comment>
<comment type="subunit">
    <text evidence="1">Homooctamer; tetramer of dimers.</text>
</comment>
<comment type="subcellular location">
    <subcellularLocation>
        <location evidence="1">Cytoplasm</location>
    </subcellularLocation>
</comment>
<comment type="similarity">
    <text evidence="1">Belongs to the PNP synthase family.</text>
</comment>
<dbReference type="EC" id="2.6.99.2" evidence="1"/>
<dbReference type="EMBL" id="CP000016">
    <property type="protein sequence ID" value="AAZ41169.1"/>
    <property type="molecule type" value="Genomic_DNA"/>
</dbReference>
<dbReference type="RefSeq" id="WP_011283080.1">
    <property type="nucleotide sequence ID" value="NC_007292.1"/>
</dbReference>
<dbReference type="SMR" id="Q492D2"/>
<dbReference type="STRING" id="291272.BPEN_559"/>
<dbReference type="KEGG" id="bpn:BPEN_559"/>
<dbReference type="eggNOG" id="COG0854">
    <property type="taxonomic scope" value="Bacteria"/>
</dbReference>
<dbReference type="HOGENOM" id="CLU_074563_0_0_6"/>
<dbReference type="OrthoDB" id="9806590at2"/>
<dbReference type="UniPathway" id="UPA00244">
    <property type="reaction ID" value="UER00313"/>
</dbReference>
<dbReference type="Proteomes" id="UP000007794">
    <property type="component" value="Chromosome"/>
</dbReference>
<dbReference type="GO" id="GO:0005829">
    <property type="term" value="C:cytosol"/>
    <property type="evidence" value="ECO:0007669"/>
    <property type="project" value="TreeGrafter"/>
</dbReference>
<dbReference type="GO" id="GO:0033856">
    <property type="term" value="F:pyridoxine 5'-phosphate synthase activity"/>
    <property type="evidence" value="ECO:0007669"/>
    <property type="project" value="UniProtKB-EC"/>
</dbReference>
<dbReference type="GO" id="GO:0008615">
    <property type="term" value="P:pyridoxine biosynthetic process"/>
    <property type="evidence" value="ECO:0007669"/>
    <property type="project" value="UniProtKB-UniRule"/>
</dbReference>
<dbReference type="CDD" id="cd00003">
    <property type="entry name" value="PNPsynthase"/>
    <property type="match status" value="1"/>
</dbReference>
<dbReference type="FunFam" id="3.20.20.70:FF:000042">
    <property type="entry name" value="Pyridoxine 5'-phosphate synthase"/>
    <property type="match status" value="1"/>
</dbReference>
<dbReference type="Gene3D" id="3.20.20.70">
    <property type="entry name" value="Aldolase class I"/>
    <property type="match status" value="1"/>
</dbReference>
<dbReference type="HAMAP" id="MF_00279">
    <property type="entry name" value="PdxJ"/>
    <property type="match status" value="1"/>
</dbReference>
<dbReference type="InterPro" id="IPR013785">
    <property type="entry name" value="Aldolase_TIM"/>
</dbReference>
<dbReference type="InterPro" id="IPR004569">
    <property type="entry name" value="PyrdxlP_synth_PdxJ"/>
</dbReference>
<dbReference type="InterPro" id="IPR036130">
    <property type="entry name" value="Pyridoxine-5'_phos_synth"/>
</dbReference>
<dbReference type="NCBIfam" id="TIGR00559">
    <property type="entry name" value="pdxJ"/>
    <property type="match status" value="1"/>
</dbReference>
<dbReference type="NCBIfam" id="NF003623">
    <property type="entry name" value="PRK05265.1-1"/>
    <property type="match status" value="1"/>
</dbReference>
<dbReference type="NCBIfam" id="NF003624">
    <property type="entry name" value="PRK05265.1-2"/>
    <property type="match status" value="1"/>
</dbReference>
<dbReference type="NCBIfam" id="NF003625">
    <property type="entry name" value="PRK05265.1-3"/>
    <property type="match status" value="1"/>
</dbReference>
<dbReference type="NCBIfam" id="NF003627">
    <property type="entry name" value="PRK05265.1-5"/>
    <property type="match status" value="1"/>
</dbReference>
<dbReference type="PANTHER" id="PTHR30456">
    <property type="entry name" value="PYRIDOXINE 5'-PHOSPHATE SYNTHASE"/>
    <property type="match status" value="1"/>
</dbReference>
<dbReference type="PANTHER" id="PTHR30456:SF0">
    <property type="entry name" value="PYRIDOXINE 5'-PHOSPHATE SYNTHASE"/>
    <property type="match status" value="1"/>
</dbReference>
<dbReference type="Pfam" id="PF03740">
    <property type="entry name" value="PdxJ"/>
    <property type="match status" value="1"/>
</dbReference>
<dbReference type="SUPFAM" id="SSF63892">
    <property type="entry name" value="Pyridoxine 5'-phosphate synthase"/>
    <property type="match status" value="1"/>
</dbReference>
<sequence>MSNLLLGVNIDHIATLRNARNTTYPDPIYAAFIAEQSGADSITIHLREDRRHITDRDVEMLCKTIQTSMNLEIAATDEMINIACTLKPHCCCLVPERRQELTTEGGLDIINKANKLQDIIFKLTEAGIRVSLFIDPNEQQISVAYNIGAPYIELHTGMYSHATDATTQNLEYKRIKKSVQYAVNKGLKVNAGHGLNYYNVRPIAMLPGIQELNIGHAIISRSIFCGLPKAIQDMKKLIQDSRRG</sequence>
<evidence type="ECO:0000255" key="1">
    <source>
        <dbReference type="HAMAP-Rule" id="MF_00279"/>
    </source>
</evidence>
<feature type="chain" id="PRO_0000231786" description="Pyridoxine 5'-phosphate synthase">
    <location>
        <begin position="1"/>
        <end position="244"/>
    </location>
</feature>
<feature type="active site" description="Proton acceptor" evidence="1">
    <location>
        <position position="45"/>
    </location>
</feature>
<feature type="active site" description="Proton acceptor" evidence="1">
    <location>
        <position position="72"/>
    </location>
</feature>
<feature type="active site" description="Proton donor" evidence="1">
    <location>
        <position position="193"/>
    </location>
</feature>
<feature type="binding site" evidence="1">
    <location>
        <position position="9"/>
    </location>
    <ligand>
        <name>3-amino-2-oxopropyl phosphate</name>
        <dbReference type="ChEBI" id="CHEBI:57279"/>
    </ligand>
</feature>
<feature type="binding site" evidence="1">
    <location>
        <begin position="11"/>
        <end position="12"/>
    </location>
    <ligand>
        <name>1-deoxy-D-xylulose 5-phosphate</name>
        <dbReference type="ChEBI" id="CHEBI:57792"/>
    </ligand>
</feature>
<feature type="binding site" evidence="1">
    <location>
        <position position="20"/>
    </location>
    <ligand>
        <name>3-amino-2-oxopropyl phosphate</name>
        <dbReference type="ChEBI" id="CHEBI:57279"/>
    </ligand>
</feature>
<feature type="binding site" evidence="1">
    <location>
        <position position="47"/>
    </location>
    <ligand>
        <name>1-deoxy-D-xylulose 5-phosphate</name>
        <dbReference type="ChEBI" id="CHEBI:57792"/>
    </ligand>
</feature>
<feature type="binding site" evidence="1">
    <location>
        <position position="52"/>
    </location>
    <ligand>
        <name>1-deoxy-D-xylulose 5-phosphate</name>
        <dbReference type="ChEBI" id="CHEBI:57792"/>
    </ligand>
</feature>
<feature type="binding site" evidence="1">
    <location>
        <position position="102"/>
    </location>
    <ligand>
        <name>1-deoxy-D-xylulose 5-phosphate</name>
        <dbReference type="ChEBI" id="CHEBI:57792"/>
    </ligand>
</feature>
<feature type="binding site" evidence="1">
    <location>
        <position position="194"/>
    </location>
    <ligand>
        <name>3-amino-2-oxopropyl phosphate</name>
        <dbReference type="ChEBI" id="CHEBI:57279"/>
    </ligand>
</feature>
<feature type="binding site" evidence="1">
    <location>
        <begin position="215"/>
        <end position="216"/>
    </location>
    <ligand>
        <name>3-amino-2-oxopropyl phosphate</name>
        <dbReference type="ChEBI" id="CHEBI:57279"/>
    </ligand>
</feature>
<feature type="site" description="Transition state stabilizer" evidence="1">
    <location>
        <position position="153"/>
    </location>
</feature>
<gene>
    <name evidence="1" type="primary">pdxJ</name>
    <name type="ordered locus">BPEN_559</name>
</gene>
<keyword id="KW-0963">Cytoplasm</keyword>
<keyword id="KW-0664">Pyridoxine biosynthesis</keyword>
<keyword id="KW-1185">Reference proteome</keyword>
<keyword id="KW-0808">Transferase</keyword>
<accession>Q492D2</accession>